<gene>
    <name evidence="1" type="primary">pyrC</name>
    <name type="ordered locus">Syncc9902_0892</name>
</gene>
<comment type="function">
    <text evidence="1">Catalyzes the reversible cyclization of carbamoyl aspartate to dihydroorotate.</text>
</comment>
<comment type="catalytic activity">
    <reaction evidence="1">
        <text>(S)-dihydroorotate + H2O = N-carbamoyl-L-aspartate + H(+)</text>
        <dbReference type="Rhea" id="RHEA:24296"/>
        <dbReference type="ChEBI" id="CHEBI:15377"/>
        <dbReference type="ChEBI" id="CHEBI:15378"/>
        <dbReference type="ChEBI" id="CHEBI:30864"/>
        <dbReference type="ChEBI" id="CHEBI:32814"/>
        <dbReference type="EC" id="3.5.2.3"/>
    </reaction>
</comment>
<comment type="cofactor">
    <cofactor evidence="1">
        <name>Zn(2+)</name>
        <dbReference type="ChEBI" id="CHEBI:29105"/>
    </cofactor>
    <text evidence="1">Binds 2 Zn(2+) ions per subunit.</text>
</comment>
<comment type="pathway">
    <text evidence="1">Pyrimidine metabolism; UMP biosynthesis via de novo pathway; (S)-dihydroorotate from bicarbonate: step 3/3.</text>
</comment>
<comment type="subunit">
    <text evidence="1">Homodimer.</text>
</comment>
<comment type="similarity">
    <text evidence="1">Belongs to the metallo-dependent hydrolases superfamily. DHOase family. Class II DHOase subfamily.</text>
</comment>
<protein>
    <recommendedName>
        <fullName evidence="1">Dihydroorotase</fullName>
        <shortName evidence="1">DHOase</shortName>
        <ecNumber evidence="1">3.5.2.3</ecNumber>
    </recommendedName>
</protein>
<name>PYRC_SYNS9</name>
<proteinExistence type="inferred from homology"/>
<sequence length="343" mass="38057">MSDQIQLIAPDDWHVHLRDGEMLKQVVPYTAQMFRRAIVMPNLRPPVVTVEAAKAYRDQIVAACHPNWGFTPLMTAYLTDDIAPEEIERGFHEGVFTAAKLYPANATTNSAAGVTELRHIHGVLLVMERIGMPLLIHGEVTDVDVDVFDREAVFIERSLKPIRDRYPGLKVVLEHITTEQAVDFVGSADQNLAATITPHHLHINRNAMFAGGLRSDFYCLPVAKRERHRLALRRAAMSGDRRFFLGTDSAPHARPGKESSCGCAGIFNAPHALESYAMAFAQDDKLDKLEAFASLHGPAFYGLPVNEGIVTLQRDDKLVPNVVNGLVPFHAGETLPWRLQPCT</sequence>
<feature type="chain" id="PRO_1000024069" description="Dihydroorotase">
    <location>
        <begin position="1"/>
        <end position="343"/>
    </location>
</feature>
<feature type="active site" evidence="1">
    <location>
        <position position="248"/>
    </location>
</feature>
<feature type="binding site" evidence="1">
    <location>
        <position position="14"/>
    </location>
    <ligand>
        <name>Zn(2+)</name>
        <dbReference type="ChEBI" id="CHEBI:29105"/>
        <label>1</label>
    </ligand>
</feature>
<feature type="binding site" evidence="1">
    <location>
        <begin position="16"/>
        <end position="18"/>
    </location>
    <ligand>
        <name>substrate</name>
    </ligand>
</feature>
<feature type="binding site" evidence="1">
    <location>
        <position position="16"/>
    </location>
    <ligand>
        <name>Zn(2+)</name>
        <dbReference type="ChEBI" id="CHEBI:29105"/>
        <label>1</label>
    </ligand>
</feature>
<feature type="binding site" evidence="1">
    <location>
        <position position="42"/>
    </location>
    <ligand>
        <name>substrate</name>
    </ligand>
</feature>
<feature type="binding site" description="via carbamate group" evidence="1">
    <location>
        <position position="100"/>
    </location>
    <ligand>
        <name>Zn(2+)</name>
        <dbReference type="ChEBI" id="CHEBI:29105"/>
        <label>1</label>
    </ligand>
</feature>
<feature type="binding site" description="via carbamate group" evidence="1">
    <location>
        <position position="100"/>
    </location>
    <ligand>
        <name>Zn(2+)</name>
        <dbReference type="ChEBI" id="CHEBI:29105"/>
        <label>2</label>
    </ligand>
</feature>
<feature type="binding site" evidence="1">
    <location>
        <position position="137"/>
    </location>
    <ligand>
        <name>substrate</name>
    </ligand>
</feature>
<feature type="binding site" evidence="1">
    <location>
        <position position="137"/>
    </location>
    <ligand>
        <name>Zn(2+)</name>
        <dbReference type="ChEBI" id="CHEBI:29105"/>
        <label>2</label>
    </ligand>
</feature>
<feature type="binding site" evidence="1">
    <location>
        <position position="175"/>
    </location>
    <ligand>
        <name>Zn(2+)</name>
        <dbReference type="ChEBI" id="CHEBI:29105"/>
        <label>2</label>
    </ligand>
</feature>
<feature type="binding site" evidence="1">
    <location>
        <position position="220"/>
    </location>
    <ligand>
        <name>substrate</name>
    </ligand>
</feature>
<feature type="binding site" evidence="1">
    <location>
        <position position="248"/>
    </location>
    <ligand>
        <name>Zn(2+)</name>
        <dbReference type="ChEBI" id="CHEBI:29105"/>
        <label>1</label>
    </ligand>
</feature>
<feature type="binding site" evidence="1">
    <location>
        <position position="252"/>
    </location>
    <ligand>
        <name>substrate</name>
    </ligand>
</feature>
<feature type="binding site" evidence="1">
    <location>
        <position position="264"/>
    </location>
    <ligand>
        <name>substrate</name>
    </ligand>
</feature>
<feature type="modified residue" description="N6-carboxylysine" evidence="1">
    <location>
        <position position="100"/>
    </location>
</feature>
<dbReference type="EC" id="3.5.2.3" evidence="1"/>
<dbReference type="EMBL" id="CP000097">
    <property type="protein sequence ID" value="ABB25858.1"/>
    <property type="molecule type" value="Genomic_DNA"/>
</dbReference>
<dbReference type="RefSeq" id="WP_011359695.1">
    <property type="nucleotide sequence ID" value="NC_007513.1"/>
</dbReference>
<dbReference type="SMR" id="Q3AYG9"/>
<dbReference type="STRING" id="316279.Syncc9902_0892"/>
<dbReference type="KEGG" id="sye:Syncc9902_0892"/>
<dbReference type="eggNOG" id="COG0418">
    <property type="taxonomic scope" value="Bacteria"/>
</dbReference>
<dbReference type="HOGENOM" id="CLU_041558_1_0_3"/>
<dbReference type="OrthoDB" id="9808095at2"/>
<dbReference type="UniPathway" id="UPA00070">
    <property type="reaction ID" value="UER00117"/>
</dbReference>
<dbReference type="Proteomes" id="UP000002712">
    <property type="component" value="Chromosome"/>
</dbReference>
<dbReference type="GO" id="GO:0005829">
    <property type="term" value="C:cytosol"/>
    <property type="evidence" value="ECO:0007669"/>
    <property type="project" value="TreeGrafter"/>
</dbReference>
<dbReference type="GO" id="GO:0004151">
    <property type="term" value="F:dihydroorotase activity"/>
    <property type="evidence" value="ECO:0007669"/>
    <property type="project" value="UniProtKB-UniRule"/>
</dbReference>
<dbReference type="GO" id="GO:0008270">
    <property type="term" value="F:zinc ion binding"/>
    <property type="evidence" value="ECO:0007669"/>
    <property type="project" value="UniProtKB-UniRule"/>
</dbReference>
<dbReference type="GO" id="GO:0006207">
    <property type="term" value="P:'de novo' pyrimidine nucleobase biosynthetic process"/>
    <property type="evidence" value="ECO:0007669"/>
    <property type="project" value="TreeGrafter"/>
</dbReference>
<dbReference type="GO" id="GO:0044205">
    <property type="term" value="P:'de novo' UMP biosynthetic process"/>
    <property type="evidence" value="ECO:0007669"/>
    <property type="project" value="UniProtKB-UniRule"/>
</dbReference>
<dbReference type="CDD" id="cd01294">
    <property type="entry name" value="DHOase"/>
    <property type="match status" value="1"/>
</dbReference>
<dbReference type="Gene3D" id="3.20.20.140">
    <property type="entry name" value="Metal-dependent hydrolases"/>
    <property type="match status" value="1"/>
</dbReference>
<dbReference type="HAMAP" id="MF_00219">
    <property type="entry name" value="PyrC_classII"/>
    <property type="match status" value="1"/>
</dbReference>
<dbReference type="InterPro" id="IPR006680">
    <property type="entry name" value="Amidohydro-rel"/>
</dbReference>
<dbReference type="InterPro" id="IPR004721">
    <property type="entry name" value="DHOdimr"/>
</dbReference>
<dbReference type="InterPro" id="IPR002195">
    <property type="entry name" value="Dihydroorotase_CS"/>
</dbReference>
<dbReference type="InterPro" id="IPR032466">
    <property type="entry name" value="Metal_Hydrolase"/>
</dbReference>
<dbReference type="NCBIfam" id="TIGR00856">
    <property type="entry name" value="pyrC_dimer"/>
    <property type="match status" value="1"/>
</dbReference>
<dbReference type="PANTHER" id="PTHR43137">
    <property type="entry name" value="DIHYDROOROTASE"/>
    <property type="match status" value="1"/>
</dbReference>
<dbReference type="PANTHER" id="PTHR43137:SF1">
    <property type="entry name" value="DIHYDROOROTASE"/>
    <property type="match status" value="1"/>
</dbReference>
<dbReference type="Pfam" id="PF01979">
    <property type="entry name" value="Amidohydro_1"/>
    <property type="match status" value="1"/>
</dbReference>
<dbReference type="PIRSF" id="PIRSF001237">
    <property type="entry name" value="DHOdimr"/>
    <property type="match status" value="1"/>
</dbReference>
<dbReference type="SUPFAM" id="SSF51556">
    <property type="entry name" value="Metallo-dependent hydrolases"/>
    <property type="match status" value="1"/>
</dbReference>
<dbReference type="PROSITE" id="PS00482">
    <property type="entry name" value="DIHYDROOROTASE_1"/>
    <property type="match status" value="1"/>
</dbReference>
<dbReference type="PROSITE" id="PS00483">
    <property type="entry name" value="DIHYDROOROTASE_2"/>
    <property type="match status" value="1"/>
</dbReference>
<keyword id="KW-0378">Hydrolase</keyword>
<keyword id="KW-0479">Metal-binding</keyword>
<keyword id="KW-0665">Pyrimidine biosynthesis</keyword>
<keyword id="KW-1185">Reference proteome</keyword>
<keyword id="KW-0862">Zinc</keyword>
<reference key="1">
    <citation type="submission" date="2005-08" db="EMBL/GenBank/DDBJ databases">
        <title>Complete sequence of Synechococcus sp. CC9902.</title>
        <authorList>
            <person name="Copeland A."/>
            <person name="Lucas S."/>
            <person name="Lapidus A."/>
            <person name="Barry K."/>
            <person name="Detter J.C."/>
            <person name="Glavina T."/>
            <person name="Hammon N."/>
            <person name="Israni S."/>
            <person name="Pitluck S."/>
            <person name="Martinez M."/>
            <person name="Schmutz J."/>
            <person name="Larimer F."/>
            <person name="Land M."/>
            <person name="Kyrpides N."/>
            <person name="Ivanova N."/>
            <person name="Richardson P."/>
        </authorList>
    </citation>
    <scope>NUCLEOTIDE SEQUENCE [LARGE SCALE GENOMIC DNA]</scope>
    <source>
        <strain>CC9902</strain>
    </source>
</reference>
<evidence type="ECO:0000255" key="1">
    <source>
        <dbReference type="HAMAP-Rule" id="MF_00219"/>
    </source>
</evidence>
<organism>
    <name type="scientific">Synechococcus sp. (strain CC9902)</name>
    <dbReference type="NCBI Taxonomy" id="316279"/>
    <lineage>
        <taxon>Bacteria</taxon>
        <taxon>Bacillati</taxon>
        <taxon>Cyanobacteriota</taxon>
        <taxon>Cyanophyceae</taxon>
        <taxon>Synechococcales</taxon>
        <taxon>Synechococcaceae</taxon>
        <taxon>Synechococcus</taxon>
    </lineage>
</organism>
<accession>Q3AYG9</accession>